<accession>Q7TNR6</accession>
<proteinExistence type="evidence at protein level"/>
<comment type="function">
    <text evidence="3">Involved in synaptic inhibition in the brain. Selectively regulates inhibitory presynaptic differentiation through interacting with presynaptic NRXN2.</text>
</comment>
<comment type="subunit">
    <text evidence="3">Interacts (Ig-like 1 domain) with NRXN2 (via Laminin G-like 1 domain) in a trans-interaction manner.</text>
</comment>
<comment type="subcellular location">
    <subcellularLocation>
        <location evidence="3">Postsynaptic cell membrane</location>
        <topology evidence="3">Lipid-anchor</topology>
        <topology evidence="3">GPI-anchor</topology>
    </subcellularLocation>
</comment>
<comment type="tissue specificity">
    <text evidence="3">Expressed in brain (at protein levels) (PubMed:28864826). Highly expressed in the pyramidal cell layer of the dorsal and ventral hippocampal CA1 and CA3 regions, layers 5 and 6 of the cortex, the thalamus and the pons and weakly expressed in the cerebellum (PubMed:28864826). Expressed in neurons but not in glia (PubMed:28864826).</text>
</comment>
<comment type="developmental stage">
    <text evidence="3">Expressed in the brain at both embryonic and postnatal stages including the adult stage. The period of highest expression of the long isoform is at around two postnatal weeks, coinciding with the peak period of synaptogenesis.</text>
</comment>
<comment type="domain">
    <text evidence="3">Ig-like 1 domain is indispensable for synaptogenic activity whereas Ig-like 2 domain is secondarily responsible for the activity.</text>
</comment>
<comment type="disruption phenotype">
    <text evidence="3">Mutants grow normally. They show an impaired sensorimotor gating with no effect on motor activity and coordination.</text>
</comment>
<organism>
    <name type="scientific">Mus musculus</name>
    <name type="common">Mouse</name>
    <dbReference type="NCBI Taxonomy" id="10090"/>
    <lineage>
        <taxon>Eukaryota</taxon>
        <taxon>Metazoa</taxon>
        <taxon>Chordata</taxon>
        <taxon>Craniata</taxon>
        <taxon>Vertebrata</taxon>
        <taxon>Euteleostomi</taxon>
        <taxon>Mammalia</taxon>
        <taxon>Eutheria</taxon>
        <taxon>Euarchontoglires</taxon>
        <taxon>Glires</taxon>
        <taxon>Rodentia</taxon>
        <taxon>Myomorpha</taxon>
        <taxon>Muroidea</taxon>
        <taxon>Muridae</taxon>
        <taxon>Murinae</taxon>
        <taxon>Mus</taxon>
        <taxon>Mus</taxon>
    </lineage>
</organism>
<dbReference type="EMBL" id="BC055811">
    <property type="protein sequence ID" value="AAH55811.1"/>
    <property type="molecule type" value="mRNA"/>
</dbReference>
<dbReference type="CCDS" id="CCDS18851.1"/>
<dbReference type="RefSeq" id="NP_941012.1">
    <property type="nucleotide sequence ID" value="NM_198610.2"/>
</dbReference>
<dbReference type="FunCoup" id="Q7TNR6">
    <property type="interactions" value="556"/>
</dbReference>
<dbReference type="IntAct" id="Q7TNR6">
    <property type="interactions" value="2"/>
</dbReference>
<dbReference type="MINT" id="Q7TNR6"/>
<dbReference type="STRING" id="10090.ENSMUSP00000046558"/>
<dbReference type="GlyConnect" id="2382">
    <property type="glycosylation" value="6 N-Linked glycans (1 site)"/>
</dbReference>
<dbReference type="GlyCosmos" id="Q7TNR6">
    <property type="glycosylation" value="3 sites, 6 glycans"/>
</dbReference>
<dbReference type="GlyGen" id="Q7TNR6">
    <property type="glycosylation" value="4 sites, 6 N-linked glycans (2 sites), 1 O-linked glycan (1 site)"/>
</dbReference>
<dbReference type="iPTMnet" id="Q7TNR6"/>
<dbReference type="PhosphoSitePlus" id="Q7TNR6"/>
<dbReference type="SwissPalm" id="Q7TNR6"/>
<dbReference type="PaxDb" id="10090-ENSMUSP00000046558"/>
<dbReference type="PeptideAtlas" id="Q7TNR6"/>
<dbReference type="ProteomicsDB" id="269544"/>
<dbReference type="Antibodypedia" id="29423">
    <property type="antibodies" value="78 antibodies from 19 providers"/>
</dbReference>
<dbReference type="DNASU" id="230868"/>
<dbReference type="Ensembl" id="ENSMUST00000039331.9">
    <property type="protein sequence ID" value="ENSMUSP00000046558.9"/>
    <property type="gene ID" value="ENSMUSG00000040972.9"/>
</dbReference>
<dbReference type="GeneID" id="230868"/>
<dbReference type="KEGG" id="mmu:230868"/>
<dbReference type="UCSC" id="uc008vmu.2">
    <property type="organism name" value="mouse"/>
</dbReference>
<dbReference type="AGR" id="MGI:2681842"/>
<dbReference type="CTD" id="84966"/>
<dbReference type="MGI" id="MGI:2681842">
    <property type="gene designation" value="Igsf21"/>
</dbReference>
<dbReference type="VEuPathDB" id="HostDB:ENSMUSG00000040972"/>
<dbReference type="eggNOG" id="ENOG502QQMY">
    <property type="taxonomic scope" value="Eukaryota"/>
</dbReference>
<dbReference type="GeneTree" id="ENSGT00390000002421"/>
<dbReference type="HOGENOM" id="CLU_054054_0_0_1"/>
<dbReference type="InParanoid" id="Q7TNR6"/>
<dbReference type="OMA" id="YTEHPSR"/>
<dbReference type="OrthoDB" id="9940999at2759"/>
<dbReference type="PhylomeDB" id="Q7TNR6"/>
<dbReference type="TreeFam" id="TF331223"/>
<dbReference type="BioGRID-ORCS" id="230868">
    <property type="hits" value="3 hits in 76 CRISPR screens"/>
</dbReference>
<dbReference type="CD-CODE" id="CE726F99">
    <property type="entry name" value="Postsynaptic density"/>
</dbReference>
<dbReference type="ChiTaRS" id="Igsf21">
    <property type="organism name" value="mouse"/>
</dbReference>
<dbReference type="PRO" id="PR:Q7TNR6"/>
<dbReference type="Proteomes" id="UP000000589">
    <property type="component" value="Chromosome 4"/>
</dbReference>
<dbReference type="RNAct" id="Q7TNR6">
    <property type="molecule type" value="protein"/>
</dbReference>
<dbReference type="Bgee" id="ENSMUSG00000040972">
    <property type="expression patterns" value="Expressed in medial dorsal nucleus of thalamus and 132 other cell types or tissues"/>
</dbReference>
<dbReference type="GO" id="GO:0009897">
    <property type="term" value="C:external side of plasma membrane"/>
    <property type="evidence" value="ECO:0000314"/>
    <property type="project" value="UniProtKB"/>
</dbReference>
<dbReference type="GO" id="GO:0060077">
    <property type="term" value="C:inhibitory synapse"/>
    <property type="evidence" value="ECO:0000314"/>
    <property type="project" value="UniProtKB"/>
</dbReference>
<dbReference type="GO" id="GO:0098839">
    <property type="term" value="C:postsynaptic density membrane"/>
    <property type="evidence" value="ECO:0000314"/>
    <property type="project" value="SynGO"/>
</dbReference>
<dbReference type="GO" id="GO:0042734">
    <property type="term" value="C:presynaptic membrane"/>
    <property type="evidence" value="ECO:0000314"/>
    <property type="project" value="UniProtKB"/>
</dbReference>
<dbReference type="GO" id="GO:0060074">
    <property type="term" value="P:synapse maturation"/>
    <property type="evidence" value="ECO:0000315"/>
    <property type="project" value="UniProtKB"/>
</dbReference>
<dbReference type="GO" id="GO:0099550">
    <property type="term" value="P:trans-synaptic signaling, modulating synaptic transmission"/>
    <property type="evidence" value="ECO:0000314"/>
    <property type="project" value="SynGO"/>
</dbReference>
<dbReference type="FunFam" id="2.60.40.10:FF:000509">
    <property type="entry name" value="Immunoglobin superfamily member 21"/>
    <property type="match status" value="1"/>
</dbReference>
<dbReference type="FunFam" id="2.60.40.10:FF:000858">
    <property type="entry name" value="Immunoglobin superfamily member 21"/>
    <property type="match status" value="1"/>
</dbReference>
<dbReference type="Gene3D" id="2.60.40.10">
    <property type="entry name" value="Immunoglobulins"/>
    <property type="match status" value="3"/>
</dbReference>
<dbReference type="InterPro" id="IPR007110">
    <property type="entry name" value="Ig-like_dom"/>
</dbReference>
<dbReference type="InterPro" id="IPR036179">
    <property type="entry name" value="Ig-like_dom_sf"/>
</dbReference>
<dbReference type="InterPro" id="IPR013783">
    <property type="entry name" value="Ig-like_fold"/>
</dbReference>
<dbReference type="InterPro" id="IPR003599">
    <property type="entry name" value="Ig_sub"/>
</dbReference>
<dbReference type="InterPro" id="IPR013106">
    <property type="entry name" value="Ig_V-set"/>
</dbReference>
<dbReference type="InterPro" id="IPR051427">
    <property type="entry name" value="Nectin/Nectin-like"/>
</dbReference>
<dbReference type="PANTHER" id="PTHR23277:SF121">
    <property type="entry name" value="IMMUNOGLOBULIN SUPERFAMILY MEMBER 21"/>
    <property type="match status" value="1"/>
</dbReference>
<dbReference type="PANTHER" id="PTHR23277">
    <property type="entry name" value="NECTIN-RELATED"/>
    <property type="match status" value="1"/>
</dbReference>
<dbReference type="Pfam" id="PF07686">
    <property type="entry name" value="V-set"/>
    <property type="match status" value="1"/>
</dbReference>
<dbReference type="SMART" id="SM00409">
    <property type="entry name" value="IG"/>
    <property type="match status" value="2"/>
</dbReference>
<dbReference type="SUPFAM" id="SSF48726">
    <property type="entry name" value="Immunoglobulin"/>
    <property type="match status" value="3"/>
</dbReference>
<dbReference type="PROSITE" id="PS50835">
    <property type="entry name" value="IG_LIKE"/>
    <property type="match status" value="2"/>
</dbReference>
<evidence type="ECO:0000255" key="1"/>
<evidence type="ECO:0000255" key="2">
    <source>
        <dbReference type="PROSITE-ProRule" id="PRU00114"/>
    </source>
</evidence>
<evidence type="ECO:0000269" key="3">
    <source>
    </source>
</evidence>
<keyword id="KW-1003">Cell membrane</keyword>
<keyword id="KW-1015">Disulfide bond</keyword>
<keyword id="KW-0325">Glycoprotein</keyword>
<keyword id="KW-0336">GPI-anchor</keyword>
<keyword id="KW-0393">Immunoglobulin domain</keyword>
<keyword id="KW-0449">Lipoprotein</keyword>
<keyword id="KW-0472">Membrane</keyword>
<keyword id="KW-0628">Postsynaptic cell membrane</keyword>
<keyword id="KW-1185">Reference proteome</keyword>
<keyword id="KW-0677">Repeat</keyword>
<keyword id="KW-0732">Signal</keyword>
<keyword id="KW-0770">Synapse</keyword>
<gene>
    <name type="primary">Igsf21</name>
</gene>
<sequence length="468" mass="51937">MQAAPSLRRASCLLLAAILDLARGYLTVNIEPLPPVVAGDAVTLKCNFKTDGRMREIVWYRVTDGGTIKQKIFTFDAMFSTNYSHMENYRKREDLVYQSTVRLPEVRISDNGPYECHVGIYDRATREKVVLASGNIFLNVMAPPTSIEVVAADSPAPFSRYQAQNFTLVCIVSGGKPAPMVYFKRDGEPIDAVPLTELPAASSGPVQDSRPFRSLLHRDVDDTKMQKSLSLLDTEYRAGRPYTERPARSLTQDPSLFVQPTTENIPETVVSREFPRWVHSAEPVYFLRHSRTPGSDGTVEVRALLTWTLNPQIDNEALFSCEVKHPALSMPMQAEVTLVAPKGPKIMMTPSRARVGDTVRILVHGFQNEVFPEPMFTWTRVGSRLLDGSAEFDGKELVLERVPAELNGSMYRCTAQNPLGSTDTHTRLIVFENPNIPRGTEDSRGSASGPAGVRLTLVLALTVILELT</sequence>
<reference key="1">
    <citation type="journal article" date="2004" name="Genome Res.">
        <title>The status, quality, and expansion of the NIH full-length cDNA project: the Mammalian Gene Collection (MGC).</title>
        <authorList>
            <consortium name="The MGC Project Team"/>
        </authorList>
    </citation>
    <scope>NUCLEOTIDE SEQUENCE [LARGE SCALE MRNA]</scope>
    <source>
        <strain>C57BL/6J</strain>
        <tissue>Brain</tissue>
    </source>
</reference>
<reference key="2">
    <citation type="journal article" date="2017" name="Nat. Commun.">
        <title>IgSF21 promotes differentiation of inhibitory synapses via binding to neurexin2alpha.</title>
        <authorList>
            <person name="Tanabe Y."/>
            <person name="Naito Y."/>
            <person name="Vasuta C."/>
            <person name="Lee A.K."/>
            <person name="Soumounou Y."/>
            <person name="Linhoff M.W."/>
            <person name="Takahashi H."/>
        </authorList>
    </citation>
    <scope>FUNCTION</scope>
    <scope>DISRUPTION PHENOTYPE</scope>
    <scope>SUBCELLULAR LOCATION</scope>
    <scope>INTERACTION WITH NRXN2</scope>
    <scope>DOMAIN</scope>
    <scope>TISSUE SPECIFICITY</scope>
    <scope>DEVELOPMENTAL STAGE</scope>
</reference>
<protein>
    <recommendedName>
        <fullName>Immunoglobulin superfamily member 21</fullName>
        <shortName>IgSF21</shortName>
    </recommendedName>
</protein>
<name>IGS21_MOUSE</name>
<feature type="signal peptide" evidence="1">
    <location>
        <begin position="1"/>
        <end position="24"/>
    </location>
</feature>
<feature type="chain" id="PRO_0000223339" description="Immunoglobulin superfamily member 21">
    <location>
        <begin position="25"/>
        <end position="468"/>
    </location>
</feature>
<feature type="domain" description="Ig-like 1">
    <location>
        <begin position="25"/>
        <end position="132"/>
    </location>
</feature>
<feature type="domain" description="Ig-like 2">
    <location>
        <begin position="344"/>
        <end position="429"/>
    </location>
</feature>
<feature type="glycosylation site" description="N-linked (GlcNAc...) asparagine" evidence="1">
    <location>
        <position position="82"/>
    </location>
</feature>
<feature type="glycosylation site" description="N-linked (GlcNAc...) asparagine" evidence="1">
    <location>
        <position position="165"/>
    </location>
</feature>
<feature type="glycosylation site" description="N-linked (GlcNAc...) asparagine" evidence="1">
    <location>
        <position position="407"/>
    </location>
</feature>
<feature type="disulfide bond" evidence="2">
    <location>
        <begin position="46"/>
        <end position="116"/>
    </location>
</feature>